<organism>
    <name type="scientific">Listeria monocytogenes serovar 1/2a (strain ATCC BAA-679 / EGD-e)</name>
    <dbReference type="NCBI Taxonomy" id="169963"/>
    <lineage>
        <taxon>Bacteria</taxon>
        <taxon>Bacillati</taxon>
        <taxon>Bacillota</taxon>
        <taxon>Bacilli</taxon>
        <taxon>Bacillales</taxon>
        <taxon>Listeriaceae</taxon>
        <taxon>Listeria</taxon>
    </lineage>
</organism>
<accession>Q8Y7D4</accession>
<proteinExistence type="inferred from homology"/>
<name>GCSPA_LISMO</name>
<reference key="1">
    <citation type="journal article" date="2001" name="Science">
        <title>Comparative genomics of Listeria species.</title>
        <authorList>
            <person name="Glaser P."/>
            <person name="Frangeul L."/>
            <person name="Buchrieser C."/>
            <person name="Rusniok C."/>
            <person name="Amend A."/>
            <person name="Baquero F."/>
            <person name="Berche P."/>
            <person name="Bloecker H."/>
            <person name="Brandt P."/>
            <person name="Chakraborty T."/>
            <person name="Charbit A."/>
            <person name="Chetouani F."/>
            <person name="Couve E."/>
            <person name="de Daruvar A."/>
            <person name="Dehoux P."/>
            <person name="Domann E."/>
            <person name="Dominguez-Bernal G."/>
            <person name="Duchaud E."/>
            <person name="Durant L."/>
            <person name="Dussurget O."/>
            <person name="Entian K.-D."/>
            <person name="Fsihi H."/>
            <person name="Garcia-del Portillo F."/>
            <person name="Garrido P."/>
            <person name="Gautier L."/>
            <person name="Goebel W."/>
            <person name="Gomez-Lopez N."/>
            <person name="Hain T."/>
            <person name="Hauf J."/>
            <person name="Jackson D."/>
            <person name="Jones L.-M."/>
            <person name="Kaerst U."/>
            <person name="Kreft J."/>
            <person name="Kuhn M."/>
            <person name="Kunst F."/>
            <person name="Kurapkat G."/>
            <person name="Madueno E."/>
            <person name="Maitournam A."/>
            <person name="Mata Vicente J."/>
            <person name="Ng E."/>
            <person name="Nedjari H."/>
            <person name="Nordsiek G."/>
            <person name="Novella S."/>
            <person name="de Pablos B."/>
            <person name="Perez-Diaz J.-C."/>
            <person name="Purcell R."/>
            <person name="Remmel B."/>
            <person name="Rose M."/>
            <person name="Schlueter T."/>
            <person name="Simoes N."/>
            <person name="Tierrez A."/>
            <person name="Vazquez-Boland J.-A."/>
            <person name="Voss H."/>
            <person name="Wehland J."/>
            <person name="Cossart P."/>
        </authorList>
    </citation>
    <scope>NUCLEOTIDE SEQUENCE [LARGE SCALE GENOMIC DNA]</scope>
    <source>
        <strain>ATCC BAA-679 / EGD-e</strain>
    </source>
</reference>
<keyword id="KW-0560">Oxidoreductase</keyword>
<keyword id="KW-1185">Reference proteome</keyword>
<feature type="chain" id="PRO_0000166967" description="Probable glycine dehydrogenase (decarboxylating) subunit 1">
    <location>
        <begin position="1"/>
        <end position="448"/>
    </location>
</feature>
<gene>
    <name evidence="1" type="primary">gcvPA</name>
    <name type="ordered locus">lmo1349</name>
</gene>
<dbReference type="EC" id="1.4.4.2" evidence="1"/>
<dbReference type="EMBL" id="AL591978">
    <property type="protein sequence ID" value="CAC99427.1"/>
    <property type="molecule type" value="Genomic_DNA"/>
</dbReference>
<dbReference type="PIR" id="AE1243">
    <property type="entry name" value="AE1243"/>
</dbReference>
<dbReference type="RefSeq" id="NP_464874.1">
    <property type="nucleotide sequence ID" value="NC_003210.1"/>
</dbReference>
<dbReference type="RefSeq" id="WP_010990102.1">
    <property type="nucleotide sequence ID" value="NZ_CP149495.1"/>
</dbReference>
<dbReference type="SMR" id="Q8Y7D4"/>
<dbReference type="STRING" id="169963.gene:17594006"/>
<dbReference type="PaxDb" id="169963-lmo1349"/>
<dbReference type="EnsemblBacteria" id="CAC99427">
    <property type="protein sequence ID" value="CAC99427"/>
    <property type="gene ID" value="CAC99427"/>
</dbReference>
<dbReference type="GeneID" id="987737"/>
<dbReference type="KEGG" id="lmo:lmo1349"/>
<dbReference type="PATRIC" id="fig|169963.11.peg.1386"/>
<dbReference type="eggNOG" id="COG0403">
    <property type="taxonomic scope" value="Bacteria"/>
</dbReference>
<dbReference type="HOGENOM" id="CLU_004620_0_2_9"/>
<dbReference type="OrthoDB" id="9771867at2"/>
<dbReference type="PhylomeDB" id="Q8Y7D4"/>
<dbReference type="BioCyc" id="LMON169963:LMO1349-MONOMER"/>
<dbReference type="Proteomes" id="UP000000817">
    <property type="component" value="Chromosome"/>
</dbReference>
<dbReference type="GO" id="GO:0004375">
    <property type="term" value="F:glycine dehydrogenase (decarboxylating) activity"/>
    <property type="evidence" value="ECO:0007669"/>
    <property type="project" value="UniProtKB-EC"/>
</dbReference>
<dbReference type="GO" id="GO:0019464">
    <property type="term" value="P:glycine decarboxylation via glycine cleavage system"/>
    <property type="evidence" value="ECO:0007669"/>
    <property type="project" value="UniProtKB-UniRule"/>
</dbReference>
<dbReference type="GO" id="GO:0009116">
    <property type="term" value="P:nucleoside metabolic process"/>
    <property type="evidence" value="ECO:0007669"/>
    <property type="project" value="InterPro"/>
</dbReference>
<dbReference type="CDD" id="cd00613">
    <property type="entry name" value="GDC-P"/>
    <property type="match status" value="1"/>
</dbReference>
<dbReference type="FunFam" id="3.40.640.10:FF:000113">
    <property type="entry name" value="Probable glycine dehydrogenase (decarboxylating) subunit 1"/>
    <property type="match status" value="1"/>
</dbReference>
<dbReference type="FunFam" id="3.90.1150.10:FF:000116">
    <property type="entry name" value="Probable glycine dehydrogenase (decarboxylating) subunit 1"/>
    <property type="match status" value="1"/>
</dbReference>
<dbReference type="Gene3D" id="3.90.1150.10">
    <property type="entry name" value="Aspartate Aminotransferase, domain 1"/>
    <property type="match status" value="1"/>
</dbReference>
<dbReference type="Gene3D" id="3.40.640.10">
    <property type="entry name" value="Type I PLP-dependent aspartate aminotransferase-like (Major domain)"/>
    <property type="match status" value="1"/>
</dbReference>
<dbReference type="HAMAP" id="MF_00712">
    <property type="entry name" value="GcvPA"/>
    <property type="match status" value="1"/>
</dbReference>
<dbReference type="InterPro" id="IPR023010">
    <property type="entry name" value="GcvPA"/>
</dbReference>
<dbReference type="InterPro" id="IPR049315">
    <property type="entry name" value="GDC-P_N"/>
</dbReference>
<dbReference type="InterPro" id="IPR020581">
    <property type="entry name" value="GDC_P"/>
</dbReference>
<dbReference type="InterPro" id="IPR015424">
    <property type="entry name" value="PyrdxlP-dep_Trfase"/>
</dbReference>
<dbReference type="InterPro" id="IPR015421">
    <property type="entry name" value="PyrdxlP-dep_Trfase_major"/>
</dbReference>
<dbReference type="InterPro" id="IPR015422">
    <property type="entry name" value="PyrdxlP-dep_Trfase_small"/>
</dbReference>
<dbReference type="NCBIfam" id="NF001696">
    <property type="entry name" value="PRK00451.1"/>
    <property type="match status" value="1"/>
</dbReference>
<dbReference type="PANTHER" id="PTHR42806">
    <property type="entry name" value="GLYCINE CLEAVAGE SYSTEM P-PROTEIN"/>
    <property type="match status" value="1"/>
</dbReference>
<dbReference type="PANTHER" id="PTHR42806:SF1">
    <property type="entry name" value="GLYCINE DEHYDROGENASE (DECARBOXYLATING)"/>
    <property type="match status" value="1"/>
</dbReference>
<dbReference type="Pfam" id="PF02347">
    <property type="entry name" value="GDC-P"/>
    <property type="match status" value="1"/>
</dbReference>
<dbReference type="PIRSF" id="PIRSF006815">
    <property type="entry name" value="GcvPA"/>
    <property type="match status" value="1"/>
</dbReference>
<dbReference type="SUPFAM" id="SSF53383">
    <property type="entry name" value="PLP-dependent transferases"/>
    <property type="match status" value="1"/>
</dbReference>
<evidence type="ECO:0000255" key="1">
    <source>
        <dbReference type="HAMAP-Rule" id="MF_00712"/>
    </source>
</evidence>
<sequence>MAKHRYLPMTEQDEKEMLDVIGVKSIDDLFQDIPEKIRFKRDYDLKPAKSEPALLRELSKLASKNANTSEYASFLGAGVYSHYIPTVVDHVISRSEFYTAYTPYQPEISQGELQAIFEFQTMIAELTGMDLANSSMYDGGTALAEAAMLASGHTKRKKILISGAVHPESSNVLKTYATGQHIEVEVIPELDGKTDIEALKKALSDDIAGFVAQYPNFYGQVEPLAELEKLVHENNSLLLVSSNPLSLGLLTPPGEFGADIVVGDSQVFGIPESFGGPHCGFFAVTNKLMRKVPGRLVGETVDENGKRGYVLTLQAREQHIRRDKATSNICSNQALNALASSVAMATLGKTGLVEMAKQNLDKSHYAKQKFREKGFEVLFSDGFFNEFVVKLSKPIKEVNKSLLDEGIIGGYDLGFYEEKYKHHMLVAVTEMRTKEEIDAFVASLEGAK</sequence>
<comment type="function">
    <text evidence="1">The glycine cleavage system catalyzes the degradation of glycine. The P protein binds the alpha-amino group of glycine through its pyridoxal phosphate cofactor; CO(2) is released and the remaining methylamine moiety is then transferred to the lipoamide cofactor of the H protein.</text>
</comment>
<comment type="catalytic activity">
    <reaction evidence="1">
        <text>N(6)-[(R)-lipoyl]-L-lysyl-[glycine-cleavage complex H protein] + glycine + H(+) = N(6)-[(R)-S(8)-aminomethyldihydrolipoyl]-L-lysyl-[glycine-cleavage complex H protein] + CO2</text>
        <dbReference type="Rhea" id="RHEA:24304"/>
        <dbReference type="Rhea" id="RHEA-COMP:10494"/>
        <dbReference type="Rhea" id="RHEA-COMP:10495"/>
        <dbReference type="ChEBI" id="CHEBI:15378"/>
        <dbReference type="ChEBI" id="CHEBI:16526"/>
        <dbReference type="ChEBI" id="CHEBI:57305"/>
        <dbReference type="ChEBI" id="CHEBI:83099"/>
        <dbReference type="ChEBI" id="CHEBI:83143"/>
        <dbReference type="EC" id="1.4.4.2"/>
    </reaction>
</comment>
<comment type="subunit">
    <text evidence="1">The glycine cleavage system is composed of four proteins: P, T, L and H. In this organism, the P 'protein' is a heterodimer of two subunits.</text>
</comment>
<comment type="similarity">
    <text evidence="1">Belongs to the GcvP family. N-terminal subunit subfamily.</text>
</comment>
<protein>
    <recommendedName>
        <fullName evidence="1">Probable glycine dehydrogenase (decarboxylating) subunit 1</fullName>
        <ecNumber evidence="1">1.4.4.2</ecNumber>
    </recommendedName>
    <alternativeName>
        <fullName evidence="1">Glycine cleavage system P-protein subunit 1</fullName>
    </alternativeName>
    <alternativeName>
        <fullName evidence="1">Glycine decarboxylase subunit 1</fullName>
    </alternativeName>
    <alternativeName>
        <fullName evidence="1">Glycine dehydrogenase (aminomethyl-transferring) subunit 1</fullName>
    </alternativeName>
</protein>